<evidence type="ECO:0000250" key="1"/>
<evidence type="ECO:0000255" key="2"/>
<evidence type="ECO:0000255" key="3">
    <source>
        <dbReference type="PROSITE-ProRule" id="PRU00172"/>
    </source>
</evidence>
<evidence type="ECO:0000256" key="4">
    <source>
        <dbReference type="SAM" id="MobiDB-lite"/>
    </source>
</evidence>
<keyword id="KW-0343">GTPase activation</keyword>
<keyword id="KW-1185">Reference proteome</keyword>
<keyword id="KW-0732">Signal</keyword>
<name>RHG36_AILME</name>
<sequence>MGGCNPFLKAARTLCPRIMPPLLFLSAFIFLVNVLGGAPGHNPDRRTKMISIHSLSELERLKLQETAYHELVARHFLSEFKPDRALPIDRPNTFEKWFLILRGQQRAVSLKTFGIRLEEVLVNELTRRKHLELTAAMQIEESTGQASGRRRGNVVQRLFGRIRRFFSSRRDEPSLPREFTRRGRRGAVSVDSLAELEDGALLLQTLQLSKISFPIGQRLLGSKRKMSLNPIAKQIPQVVEACCSFIEKHGLSAVGIFTLEYSEERVRELREEFDQGLDVVLDDTQNVHDVAALLKEFFRDMKDSLLPDDLYMSFLLTATLKPQDQLSALQLLVYLMPPCHSDTLERLLKALHKITENCEDSIGIDGQLVSGNRMTSTNLALVFGSALLKKGRFAKRESRKTRLGIDHYVASVNVVRAMIDNWDILFQVPPHIQKQVAKRVWKSSPEALDFIRRRNLRKIQSARIKMEEDALLSDPVENSAEAWAAVLAQSKPFDEGSSEEPAVPPGTAHSHDDEEGAGNPPIPEQDRPLLRVPREKQAKTGIGYFFP</sequence>
<feature type="signal peptide" evidence="2">
    <location>
        <begin position="1"/>
        <end position="40"/>
    </location>
</feature>
<feature type="chain" id="PRO_0000394286" description="Rho GTPase-activating protein 36">
    <location>
        <begin position="41"/>
        <end position="547"/>
    </location>
</feature>
<feature type="domain" description="Rho-GAP" evidence="3">
    <location>
        <begin position="226"/>
        <end position="426"/>
    </location>
</feature>
<feature type="region of interest" description="Disordered" evidence="4">
    <location>
        <begin position="493"/>
        <end position="547"/>
    </location>
</feature>
<feature type="compositionally biased region" description="Basic and acidic residues" evidence="4">
    <location>
        <begin position="524"/>
        <end position="538"/>
    </location>
</feature>
<feature type="site" description="Arginine finger; crucial for GTP hydrolysis by stabilizing the transition state" evidence="3">
    <location>
        <position position="258"/>
    </location>
</feature>
<proteinExistence type="inferred from homology"/>
<dbReference type="EMBL" id="GL192610">
    <property type="protein sequence ID" value="EFB26848.1"/>
    <property type="molecule type" value="Genomic_DNA"/>
</dbReference>
<dbReference type="RefSeq" id="XP_002918650.1">
    <property type="nucleotide sequence ID" value="XM_002918604.4"/>
</dbReference>
<dbReference type="SMR" id="D2H9U0"/>
<dbReference type="STRING" id="9646.ENSAMEP00000015593"/>
<dbReference type="Ensembl" id="ENSAMET00000049380.1">
    <property type="protein sequence ID" value="ENSAMEP00000026208.1"/>
    <property type="gene ID" value="ENSAMEG00000014800.2"/>
</dbReference>
<dbReference type="GeneID" id="100477893"/>
<dbReference type="KEGG" id="aml:100477893"/>
<dbReference type="CTD" id="158763"/>
<dbReference type="GeneTree" id="ENSGT00940000153904"/>
<dbReference type="InParanoid" id="D2H9U0"/>
<dbReference type="OrthoDB" id="10024839at2759"/>
<dbReference type="Proteomes" id="UP000008912">
    <property type="component" value="Unassembled WGS sequence"/>
</dbReference>
<dbReference type="GO" id="GO:0005096">
    <property type="term" value="F:GTPase activator activity"/>
    <property type="evidence" value="ECO:0007669"/>
    <property type="project" value="UniProtKB-KW"/>
</dbReference>
<dbReference type="GO" id="GO:0007165">
    <property type="term" value="P:signal transduction"/>
    <property type="evidence" value="ECO:0007669"/>
    <property type="project" value="InterPro"/>
</dbReference>
<dbReference type="CDD" id="cd04376">
    <property type="entry name" value="RhoGAP_ARHGAP6"/>
    <property type="match status" value="1"/>
</dbReference>
<dbReference type="FunFam" id="1.10.555.10:FF:000017">
    <property type="entry name" value="Rho GTPase activating protein 6"/>
    <property type="match status" value="1"/>
</dbReference>
<dbReference type="Gene3D" id="1.10.555.10">
    <property type="entry name" value="Rho GTPase activation protein"/>
    <property type="match status" value="1"/>
</dbReference>
<dbReference type="InterPro" id="IPR041852">
    <property type="entry name" value="ARHGAP6_RhoGAP"/>
</dbReference>
<dbReference type="InterPro" id="IPR008936">
    <property type="entry name" value="Rho_GTPase_activation_prot"/>
</dbReference>
<dbReference type="InterPro" id="IPR037863">
    <property type="entry name" value="RHOGAP6/36"/>
</dbReference>
<dbReference type="InterPro" id="IPR000198">
    <property type="entry name" value="RhoGAP_dom"/>
</dbReference>
<dbReference type="PANTHER" id="PTHR12635:SF8">
    <property type="entry name" value="RHO GTPASE-ACTIVATING PROTEIN 36"/>
    <property type="match status" value="1"/>
</dbReference>
<dbReference type="PANTHER" id="PTHR12635">
    <property type="entry name" value="RHO-GTPASE-ACTIVATING PROTEIN 6 FAMILY MEMBER"/>
    <property type="match status" value="1"/>
</dbReference>
<dbReference type="Pfam" id="PF00620">
    <property type="entry name" value="RhoGAP"/>
    <property type="match status" value="1"/>
</dbReference>
<dbReference type="SMART" id="SM00324">
    <property type="entry name" value="RhoGAP"/>
    <property type="match status" value="1"/>
</dbReference>
<dbReference type="SUPFAM" id="SSF48350">
    <property type="entry name" value="GTPase activation domain, GAP"/>
    <property type="match status" value="1"/>
</dbReference>
<dbReference type="PROSITE" id="PS50238">
    <property type="entry name" value="RHOGAP"/>
    <property type="match status" value="1"/>
</dbReference>
<gene>
    <name type="primary">ARHGAP36</name>
    <name type="ORF">PANDA_007122</name>
</gene>
<comment type="function">
    <text evidence="1">GTPase activator for the Rho-type GTPases by converting them to an inactive GDP-bound state.</text>
</comment>
<accession>D2H9U0</accession>
<protein>
    <recommendedName>
        <fullName>Rho GTPase-activating protein 36</fullName>
    </recommendedName>
</protein>
<organism>
    <name type="scientific">Ailuropoda melanoleuca</name>
    <name type="common">Giant panda</name>
    <dbReference type="NCBI Taxonomy" id="9646"/>
    <lineage>
        <taxon>Eukaryota</taxon>
        <taxon>Metazoa</taxon>
        <taxon>Chordata</taxon>
        <taxon>Craniata</taxon>
        <taxon>Vertebrata</taxon>
        <taxon>Euteleostomi</taxon>
        <taxon>Mammalia</taxon>
        <taxon>Eutheria</taxon>
        <taxon>Laurasiatheria</taxon>
        <taxon>Carnivora</taxon>
        <taxon>Caniformia</taxon>
        <taxon>Ursidae</taxon>
        <taxon>Ailuropoda</taxon>
    </lineage>
</organism>
<reference key="1">
    <citation type="journal article" date="2010" name="Nature">
        <title>The sequence and de novo assembly of the giant panda genome.</title>
        <authorList>
            <person name="Li R."/>
            <person name="Fan W."/>
            <person name="Tian G."/>
            <person name="Zhu H."/>
            <person name="He L."/>
            <person name="Cai J."/>
            <person name="Huang Q."/>
            <person name="Cai Q."/>
            <person name="Li B."/>
            <person name="Bai Y."/>
            <person name="Zhang Z."/>
            <person name="Zhang Y."/>
            <person name="Wang W."/>
            <person name="Li J."/>
            <person name="Wei F."/>
            <person name="Li H."/>
            <person name="Jian M."/>
            <person name="Li J."/>
            <person name="Zhang Z."/>
            <person name="Nielsen R."/>
            <person name="Li D."/>
            <person name="Gu W."/>
            <person name="Yang Z."/>
            <person name="Xuan Z."/>
            <person name="Ryder O.A."/>
            <person name="Leung F.C."/>
            <person name="Zhou Y."/>
            <person name="Cao J."/>
            <person name="Sun X."/>
            <person name="Fu Y."/>
            <person name="Fang X."/>
            <person name="Guo X."/>
            <person name="Wang B."/>
            <person name="Hou R."/>
            <person name="Shen F."/>
            <person name="Mu B."/>
            <person name="Ni P."/>
            <person name="Lin R."/>
            <person name="Qian W."/>
            <person name="Wang G."/>
            <person name="Yu C."/>
            <person name="Nie W."/>
            <person name="Wang J."/>
            <person name="Wu Z."/>
            <person name="Liang H."/>
            <person name="Min J."/>
            <person name="Wu Q."/>
            <person name="Cheng S."/>
            <person name="Ruan J."/>
            <person name="Wang M."/>
            <person name="Shi Z."/>
            <person name="Wen M."/>
            <person name="Liu B."/>
            <person name="Ren X."/>
            <person name="Zheng H."/>
            <person name="Dong D."/>
            <person name="Cook K."/>
            <person name="Shan G."/>
            <person name="Zhang H."/>
            <person name="Kosiol C."/>
            <person name="Xie X."/>
            <person name="Lu Z."/>
            <person name="Zheng H."/>
            <person name="Li Y."/>
            <person name="Steiner C.C."/>
            <person name="Lam T.T."/>
            <person name="Lin S."/>
            <person name="Zhang Q."/>
            <person name="Li G."/>
            <person name="Tian J."/>
            <person name="Gong T."/>
            <person name="Liu H."/>
            <person name="Zhang D."/>
            <person name="Fang L."/>
            <person name="Ye C."/>
            <person name="Zhang J."/>
            <person name="Hu W."/>
            <person name="Xu A."/>
            <person name="Ren Y."/>
            <person name="Zhang G."/>
            <person name="Bruford M.W."/>
            <person name="Li Q."/>
            <person name="Ma L."/>
            <person name="Guo Y."/>
            <person name="An N."/>
            <person name="Hu Y."/>
            <person name="Zheng Y."/>
            <person name="Shi Y."/>
            <person name="Li Z."/>
            <person name="Liu Q."/>
            <person name="Chen Y."/>
            <person name="Zhao J."/>
            <person name="Qu N."/>
            <person name="Zhao S."/>
            <person name="Tian F."/>
            <person name="Wang X."/>
            <person name="Wang H."/>
            <person name="Xu L."/>
            <person name="Liu X."/>
            <person name="Vinar T."/>
            <person name="Wang Y."/>
            <person name="Lam T.W."/>
            <person name="Yiu S.M."/>
            <person name="Liu S."/>
            <person name="Zhang H."/>
            <person name="Li D."/>
            <person name="Huang Y."/>
            <person name="Wang X."/>
            <person name="Yang G."/>
            <person name="Jiang Z."/>
            <person name="Wang J."/>
            <person name="Qin N."/>
            <person name="Li L."/>
            <person name="Li J."/>
            <person name="Bolund L."/>
            <person name="Kristiansen K."/>
            <person name="Wong G.K."/>
            <person name="Olson M."/>
            <person name="Zhang X."/>
            <person name="Li S."/>
            <person name="Yang H."/>
            <person name="Wang J."/>
            <person name="Wang J."/>
        </authorList>
    </citation>
    <scope>NUCLEOTIDE SEQUENCE [LARGE SCALE GENOMIC DNA]</scope>
</reference>